<protein>
    <recommendedName>
        <fullName evidence="1">Oxygen-dependent choline dehydrogenase</fullName>
        <shortName evidence="1">CDH</shortName>
        <shortName evidence="1">CHD</shortName>
        <ecNumber evidence="1">1.1.99.1</ecNumber>
    </recommendedName>
    <alternativeName>
        <fullName evidence="1">Betaine aldehyde dehydrogenase</fullName>
        <shortName evidence="1">BADH</shortName>
        <ecNumber evidence="1">1.2.1.8</ecNumber>
    </alternativeName>
</protein>
<comment type="function">
    <text evidence="1">Involved in the biosynthesis of the osmoprotectant glycine betaine. Catalyzes the oxidation of choline to betaine aldehyde and betaine aldehyde to glycine betaine at the same rate.</text>
</comment>
<comment type="catalytic activity">
    <reaction evidence="1">
        <text>choline + A = betaine aldehyde + AH2</text>
        <dbReference type="Rhea" id="RHEA:17433"/>
        <dbReference type="ChEBI" id="CHEBI:13193"/>
        <dbReference type="ChEBI" id="CHEBI:15354"/>
        <dbReference type="ChEBI" id="CHEBI:15710"/>
        <dbReference type="ChEBI" id="CHEBI:17499"/>
        <dbReference type="EC" id="1.1.99.1"/>
    </reaction>
</comment>
<comment type="catalytic activity">
    <reaction evidence="1">
        <text>betaine aldehyde + NAD(+) + H2O = glycine betaine + NADH + 2 H(+)</text>
        <dbReference type="Rhea" id="RHEA:15305"/>
        <dbReference type="ChEBI" id="CHEBI:15377"/>
        <dbReference type="ChEBI" id="CHEBI:15378"/>
        <dbReference type="ChEBI" id="CHEBI:15710"/>
        <dbReference type="ChEBI" id="CHEBI:17750"/>
        <dbReference type="ChEBI" id="CHEBI:57540"/>
        <dbReference type="ChEBI" id="CHEBI:57945"/>
        <dbReference type="EC" id="1.2.1.8"/>
    </reaction>
</comment>
<comment type="cofactor">
    <cofactor evidence="1">
        <name>FAD</name>
        <dbReference type="ChEBI" id="CHEBI:57692"/>
    </cofactor>
</comment>
<comment type="pathway">
    <text evidence="1">Amine and polyamine biosynthesis; betaine biosynthesis via choline pathway; betaine aldehyde from choline (cytochrome c reductase route): step 1/1.</text>
</comment>
<comment type="similarity">
    <text evidence="1">Belongs to the GMC oxidoreductase family.</text>
</comment>
<reference key="1">
    <citation type="journal article" date="2006" name="Genome Biol.">
        <title>Genomic analysis reveals that Pseudomonas aeruginosa virulence is combinatorial.</title>
        <authorList>
            <person name="Lee D.G."/>
            <person name="Urbach J.M."/>
            <person name="Wu G."/>
            <person name="Liberati N.T."/>
            <person name="Feinbaum R.L."/>
            <person name="Miyata S."/>
            <person name="Diggins L.T."/>
            <person name="He J."/>
            <person name="Saucier M."/>
            <person name="Deziel E."/>
            <person name="Friedman L."/>
            <person name="Li L."/>
            <person name="Grills G."/>
            <person name="Montgomery K."/>
            <person name="Kucherlapati R."/>
            <person name="Rahme L.G."/>
            <person name="Ausubel F.M."/>
        </authorList>
    </citation>
    <scope>NUCLEOTIDE SEQUENCE [LARGE SCALE GENOMIC DNA]</scope>
    <source>
        <strain>UCBPP-PA14</strain>
    </source>
</reference>
<name>BETA_PSEAB</name>
<dbReference type="EC" id="1.1.99.1" evidence="1"/>
<dbReference type="EC" id="1.2.1.8" evidence="1"/>
<dbReference type="EMBL" id="CP000438">
    <property type="protein sequence ID" value="ABJ14755.1"/>
    <property type="molecule type" value="Genomic_DNA"/>
</dbReference>
<dbReference type="RefSeq" id="WP_003142051.1">
    <property type="nucleotide sequence ID" value="NZ_CP034244.1"/>
</dbReference>
<dbReference type="SMR" id="Q02DZ0"/>
<dbReference type="KEGG" id="pau:PA14_70940"/>
<dbReference type="PseudoCAP" id="PA14_70940"/>
<dbReference type="HOGENOM" id="CLU_002865_7_1_6"/>
<dbReference type="BioCyc" id="PAER208963:G1G74-5971-MONOMER"/>
<dbReference type="UniPathway" id="UPA00529">
    <property type="reaction ID" value="UER00385"/>
</dbReference>
<dbReference type="Proteomes" id="UP000000653">
    <property type="component" value="Chromosome"/>
</dbReference>
<dbReference type="GO" id="GO:0016020">
    <property type="term" value="C:membrane"/>
    <property type="evidence" value="ECO:0007669"/>
    <property type="project" value="TreeGrafter"/>
</dbReference>
<dbReference type="GO" id="GO:0008802">
    <property type="term" value="F:betaine-aldehyde dehydrogenase (NAD+) activity"/>
    <property type="evidence" value="ECO:0007669"/>
    <property type="project" value="UniProtKB-EC"/>
</dbReference>
<dbReference type="GO" id="GO:0008812">
    <property type="term" value="F:choline dehydrogenase activity"/>
    <property type="evidence" value="ECO:0007669"/>
    <property type="project" value="UniProtKB-UniRule"/>
</dbReference>
<dbReference type="GO" id="GO:0050660">
    <property type="term" value="F:flavin adenine dinucleotide binding"/>
    <property type="evidence" value="ECO:0007669"/>
    <property type="project" value="InterPro"/>
</dbReference>
<dbReference type="GO" id="GO:0019285">
    <property type="term" value="P:glycine betaine biosynthetic process from choline"/>
    <property type="evidence" value="ECO:0007669"/>
    <property type="project" value="UniProtKB-UniRule"/>
</dbReference>
<dbReference type="Gene3D" id="3.50.50.60">
    <property type="entry name" value="FAD/NAD(P)-binding domain"/>
    <property type="match status" value="1"/>
</dbReference>
<dbReference type="Gene3D" id="3.30.560.10">
    <property type="entry name" value="Glucose Oxidase, domain 3"/>
    <property type="match status" value="1"/>
</dbReference>
<dbReference type="HAMAP" id="MF_00750">
    <property type="entry name" value="Choline_dehydrogen"/>
    <property type="match status" value="1"/>
</dbReference>
<dbReference type="InterPro" id="IPR011533">
    <property type="entry name" value="BetA"/>
</dbReference>
<dbReference type="InterPro" id="IPR036188">
    <property type="entry name" value="FAD/NAD-bd_sf"/>
</dbReference>
<dbReference type="InterPro" id="IPR012132">
    <property type="entry name" value="GMC_OxRdtase"/>
</dbReference>
<dbReference type="InterPro" id="IPR000172">
    <property type="entry name" value="GMC_OxRdtase_N"/>
</dbReference>
<dbReference type="InterPro" id="IPR007867">
    <property type="entry name" value="GMC_OxRtase_C"/>
</dbReference>
<dbReference type="NCBIfam" id="TIGR01810">
    <property type="entry name" value="betA"/>
    <property type="match status" value="1"/>
</dbReference>
<dbReference type="NCBIfam" id="NF002550">
    <property type="entry name" value="PRK02106.1"/>
    <property type="match status" value="1"/>
</dbReference>
<dbReference type="PANTHER" id="PTHR11552:SF147">
    <property type="entry name" value="CHOLINE DEHYDROGENASE, MITOCHONDRIAL"/>
    <property type="match status" value="1"/>
</dbReference>
<dbReference type="PANTHER" id="PTHR11552">
    <property type="entry name" value="GLUCOSE-METHANOL-CHOLINE GMC OXIDOREDUCTASE"/>
    <property type="match status" value="1"/>
</dbReference>
<dbReference type="Pfam" id="PF05199">
    <property type="entry name" value="GMC_oxred_C"/>
    <property type="match status" value="1"/>
</dbReference>
<dbReference type="Pfam" id="PF00732">
    <property type="entry name" value="GMC_oxred_N"/>
    <property type="match status" value="1"/>
</dbReference>
<dbReference type="PIRSF" id="PIRSF000137">
    <property type="entry name" value="Alcohol_oxidase"/>
    <property type="match status" value="1"/>
</dbReference>
<dbReference type="SUPFAM" id="SSF54373">
    <property type="entry name" value="FAD-linked reductases, C-terminal domain"/>
    <property type="match status" value="1"/>
</dbReference>
<dbReference type="SUPFAM" id="SSF51905">
    <property type="entry name" value="FAD/NAD(P)-binding domain"/>
    <property type="match status" value="1"/>
</dbReference>
<dbReference type="PROSITE" id="PS00623">
    <property type="entry name" value="GMC_OXRED_1"/>
    <property type="match status" value="1"/>
</dbReference>
<dbReference type="PROSITE" id="PS00624">
    <property type="entry name" value="GMC_OXRED_2"/>
    <property type="match status" value="1"/>
</dbReference>
<keyword id="KW-0274">FAD</keyword>
<keyword id="KW-0285">Flavoprotein</keyword>
<keyword id="KW-0520">NAD</keyword>
<keyword id="KW-0560">Oxidoreductase</keyword>
<feature type="chain" id="PRO_1000046567" description="Oxygen-dependent choline dehydrogenase">
    <location>
        <begin position="1"/>
        <end position="561"/>
    </location>
</feature>
<feature type="active site" description="Proton acceptor" evidence="1">
    <location>
        <position position="475"/>
    </location>
</feature>
<feature type="binding site" evidence="1">
    <location>
        <begin position="6"/>
        <end position="35"/>
    </location>
    <ligand>
        <name>FAD</name>
        <dbReference type="ChEBI" id="CHEBI:57692"/>
    </ligand>
</feature>
<sequence>MSQEFDYIIIGAGSAGNVLATRLTEDADVSVLLLEAGGPDYRFDFRTQMPAALAFPLQGRRYNWAYETDPEPYMNNRRMECGRGKGLGGSSLINGMCYIRGNALDFDGWAKEPGLEDWSYLDCLPYFRKAETRDIGPNDYHGGDGPVSVTTPKAGNNPLFHAMVEAGVQAGYPRTDDLNGYQQEGFGPMDRTVTPEGRRAATGRGYLDQARGRPNLTIVTHALSDRILFSGKRAIGVSYLVGNGDNPATAHARREVLVCSGAIASPQLLQRSGVGPAALLRDLDIPAVHDLPGVGANLQDHLELYLQYACKQPVSIYPATKWWNQPAIGAQWLFLGKGLGASNQFEAGGFIRTREAFEWPNIQFHFLPVAINYNGSKGVQEHGFQAHMGSMRSPSRGRIHLKSRDPRQHPSILFNYMSHEQDWQEFRDGIRLTREIMNQPALDPYRGRELSPGVNVQSDAELDEFIRNHAETAFHPSCSCKMGSDDMAVVDGQGRVHGMEGLRVVDASIMPLIITGNLNATTIMMAEKIADRIRGRQPLPRSTAKYYVAGDAPVRGNPVRA</sequence>
<evidence type="ECO:0000255" key="1">
    <source>
        <dbReference type="HAMAP-Rule" id="MF_00750"/>
    </source>
</evidence>
<organism>
    <name type="scientific">Pseudomonas aeruginosa (strain UCBPP-PA14)</name>
    <dbReference type="NCBI Taxonomy" id="208963"/>
    <lineage>
        <taxon>Bacteria</taxon>
        <taxon>Pseudomonadati</taxon>
        <taxon>Pseudomonadota</taxon>
        <taxon>Gammaproteobacteria</taxon>
        <taxon>Pseudomonadales</taxon>
        <taxon>Pseudomonadaceae</taxon>
        <taxon>Pseudomonas</taxon>
    </lineage>
</organism>
<accession>Q02DZ0</accession>
<gene>
    <name evidence="1" type="primary">betA</name>
    <name type="ordered locus">PA14_70940</name>
</gene>
<proteinExistence type="inferred from homology"/>